<name>RNZ_LACLS</name>
<keyword id="KW-0255">Endonuclease</keyword>
<keyword id="KW-0378">Hydrolase</keyword>
<keyword id="KW-0479">Metal-binding</keyword>
<keyword id="KW-0540">Nuclease</keyword>
<keyword id="KW-0819">tRNA processing</keyword>
<keyword id="KW-0862">Zinc</keyword>
<sequence>MEIQFLGTGAGQPSKSRNTQAIALKMLDERNEIWLFDCGEASQHQILNTAIKPRKITKIFITHLHGDHIFGLPGFLSSRSFQSSDEQTDLDLYGPVGIKEFVLTGLRISGSRLGYRINFHEIDSAGKIFEDDSFEVYTDLLDHTIFCLGYRVVEKNRVGELDANALKEAGLPFGPLFGKIKKGEVVAYDGKTFDPKDYIGADKVGKIVTILGDTRKTKTAVRLAWQADLLVHEATYEASESKMARAHGHSTTKQAADVAKEAGVNRLLLTHISARYVGPLVGQLVREAQAVHANTFVSKDLYEEKIG</sequence>
<proteinExistence type="inferred from homology"/>
<protein>
    <recommendedName>
        <fullName evidence="1">Ribonuclease Z</fullName>
        <shortName evidence="1">RNase Z</shortName>
        <ecNumber evidence="1">3.1.26.11</ecNumber>
    </recommendedName>
    <alternativeName>
        <fullName evidence="1">tRNA 3 endonuclease</fullName>
    </alternativeName>
    <alternativeName>
        <fullName evidence="1">tRNase Z</fullName>
    </alternativeName>
</protein>
<gene>
    <name evidence="1" type="primary">rnz</name>
    <name type="ordered locus">LACR_0654</name>
</gene>
<organism>
    <name type="scientific">Lactococcus lactis subsp. cremoris (strain SK11)</name>
    <dbReference type="NCBI Taxonomy" id="272622"/>
    <lineage>
        <taxon>Bacteria</taxon>
        <taxon>Bacillati</taxon>
        <taxon>Bacillota</taxon>
        <taxon>Bacilli</taxon>
        <taxon>Lactobacillales</taxon>
        <taxon>Streptococcaceae</taxon>
        <taxon>Lactococcus</taxon>
        <taxon>Lactococcus cremoris subsp. cremoris</taxon>
    </lineage>
</organism>
<feature type="chain" id="PRO_1000070290" description="Ribonuclease Z">
    <location>
        <begin position="1"/>
        <end position="307"/>
    </location>
</feature>
<feature type="active site" description="Proton acceptor" evidence="1">
    <location>
        <position position="67"/>
    </location>
</feature>
<feature type="binding site" evidence="1">
    <location>
        <position position="63"/>
    </location>
    <ligand>
        <name>Zn(2+)</name>
        <dbReference type="ChEBI" id="CHEBI:29105"/>
        <label>1</label>
        <note>catalytic</note>
    </ligand>
</feature>
<feature type="binding site" evidence="1">
    <location>
        <position position="65"/>
    </location>
    <ligand>
        <name>Zn(2+)</name>
        <dbReference type="ChEBI" id="CHEBI:29105"/>
        <label>1</label>
        <note>catalytic</note>
    </ligand>
</feature>
<feature type="binding site" evidence="1">
    <location>
        <position position="67"/>
    </location>
    <ligand>
        <name>Zn(2+)</name>
        <dbReference type="ChEBI" id="CHEBI:29105"/>
        <label>2</label>
        <note>catalytic</note>
    </ligand>
</feature>
<feature type="binding site" evidence="1">
    <location>
        <position position="68"/>
    </location>
    <ligand>
        <name>Zn(2+)</name>
        <dbReference type="ChEBI" id="CHEBI:29105"/>
        <label>2</label>
        <note>catalytic</note>
    </ligand>
</feature>
<feature type="binding site" evidence="1">
    <location>
        <position position="143"/>
    </location>
    <ligand>
        <name>Zn(2+)</name>
        <dbReference type="ChEBI" id="CHEBI:29105"/>
        <label>1</label>
        <note>catalytic</note>
    </ligand>
</feature>
<feature type="binding site" evidence="1">
    <location>
        <position position="213"/>
    </location>
    <ligand>
        <name>Zn(2+)</name>
        <dbReference type="ChEBI" id="CHEBI:29105"/>
        <label>1</label>
        <note>catalytic</note>
    </ligand>
</feature>
<feature type="binding site" evidence="1">
    <location>
        <position position="213"/>
    </location>
    <ligand>
        <name>Zn(2+)</name>
        <dbReference type="ChEBI" id="CHEBI:29105"/>
        <label>2</label>
        <note>catalytic</note>
    </ligand>
</feature>
<feature type="binding site" evidence="1">
    <location>
        <position position="271"/>
    </location>
    <ligand>
        <name>Zn(2+)</name>
        <dbReference type="ChEBI" id="CHEBI:29105"/>
        <label>2</label>
        <note>catalytic</note>
    </ligand>
</feature>
<reference key="1">
    <citation type="journal article" date="2006" name="Proc. Natl. Acad. Sci. U.S.A.">
        <title>Comparative genomics of the lactic acid bacteria.</title>
        <authorList>
            <person name="Makarova K.S."/>
            <person name="Slesarev A."/>
            <person name="Wolf Y.I."/>
            <person name="Sorokin A."/>
            <person name="Mirkin B."/>
            <person name="Koonin E.V."/>
            <person name="Pavlov A."/>
            <person name="Pavlova N."/>
            <person name="Karamychev V."/>
            <person name="Polouchine N."/>
            <person name="Shakhova V."/>
            <person name="Grigoriev I."/>
            <person name="Lou Y."/>
            <person name="Rohksar D."/>
            <person name="Lucas S."/>
            <person name="Huang K."/>
            <person name="Goodstein D.M."/>
            <person name="Hawkins T."/>
            <person name="Plengvidhya V."/>
            <person name="Welker D."/>
            <person name="Hughes J."/>
            <person name="Goh Y."/>
            <person name="Benson A."/>
            <person name="Baldwin K."/>
            <person name="Lee J.-H."/>
            <person name="Diaz-Muniz I."/>
            <person name="Dosti B."/>
            <person name="Smeianov V."/>
            <person name="Wechter W."/>
            <person name="Barabote R."/>
            <person name="Lorca G."/>
            <person name="Altermann E."/>
            <person name="Barrangou R."/>
            <person name="Ganesan B."/>
            <person name="Xie Y."/>
            <person name="Rawsthorne H."/>
            <person name="Tamir D."/>
            <person name="Parker C."/>
            <person name="Breidt F."/>
            <person name="Broadbent J.R."/>
            <person name="Hutkins R."/>
            <person name="O'Sullivan D."/>
            <person name="Steele J."/>
            <person name="Unlu G."/>
            <person name="Saier M.H. Jr."/>
            <person name="Klaenhammer T."/>
            <person name="Richardson P."/>
            <person name="Kozyavkin S."/>
            <person name="Weimer B.C."/>
            <person name="Mills D.A."/>
        </authorList>
    </citation>
    <scope>NUCLEOTIDE SEQUENCE [LARGE SCALE GENOMIC DNA]</scope>
    <source>
        <strain>SK11</strain>
    </source>
</reference>
<accession>Q031A3</accession>
<dbReference type="EC" id="3.1.26.11" evidence="1"/>
<dbReference type="EMBL" id="CP000425">
    <property type="protein sequence ID" value="ABJ72219.1"/>
    <property type="molecule type" value="Genomic_DNA"/>
</dbReference>
<dbReference type="RefSeq" id="WP_011675771.1">
    <property type="nucleotide sequence ID" value="NC_008527.1"/>
</dbReference>
<dbReference type="SMR" id="Q031A3"/>
<dbReference type="KEGG" id="llc:LACR_0654"/>
<dbReference type="HOGENOM" id="CLU_031317_2_0_9"/>
<dbReference type="Proteomes" id="UP000000240">
    <property type="component" value="Chromosome"/>
</dbReference>
<dbReference type="GO" id="GO:0042781">
    <property type="term" value="F:3'-tRNA processing endoribonuclease activity"/>
    <property type="evidence" value="ECO:0007669"/>
    <property type="project" value="UniProtKB-UniRule"/>
</dbReference>
<dbReference type="GO" id="GO:0008270">
    <property type="term" value="F:zinc ion binding"/>
    <property type="evidence" value="ECO:0007669"/>
    <property type="project" value="UniProtKB-UniRule"/>
</dbReference>
<dbReference type="CDD" id="cd07717">
    <property type="entry name" value="RNaseZ_ZiPD-like_MBL-fold"/>
    <property type="match status" value="1"/>
</dbReference>
<dbReference type="FunFam" id="3.60.15.10:FF:000002">
    <property type="entry name" value="Ribonuclease Z"/>
    <property type="match status" value="1"/>
</dbReference>
<dbReference type="Gene3D" id="3.60.15.10">
    <property type="entry name" value="Ribonuclease Z/Hydroxyacylglutathione hydrolase-like"/>
    <property type="match status" value="1"/>
</dbReference>
<dbReference type="HAMAP" id="MF_01818">
    <property type="entry name" value="RNase_Z_BN"/>
    <property type="match status" value="1"/>
</dbReference>
<dbReference type="InterPro" id="IPR001279">
    <property type="entry name" value="Metallo-B-lactamas"/>
</dbReference>
<dbReference type="InterPro" id="IPR036866">
    <property type="entry name" value="RibonucZ/Hydroxyglut_hydro"/>
</dbReference>
<dbReference type="InterPro" id="IPR013471">
    <property type="entry name" value="RNase_Z/BN"/>
</dbReference>
<dbReference type="NCBIfam" id="NF000801">
    <property type="entry name" value="PRK00055.1-3"/>
    <property type="match status" value="1"/>
</dbReference>
<dbReference type="NCBIfam" id="TIGR02651">
    <property type="entry name" value="RNase_Z"/>
    <property type="match status" value="1"/>
</dbReference>
<dbReference type="PANTHER" id="PTHR46018">
    <property type="entry name" value="ZINC PHOSPHODIESTERASE ELAC PROTEIN 1"/>
    <property type="match status" value="1"/>
</dbReference>
<dbReference type="PANTHER" id="PTHR46018:SF2">
    <property type="entry name" value="ZINC PHOSPHODIESTERASE ELAC PROTEIN 1"/>
    <property type="match status" value="1"/>
</dbReference>
<dbReference type="Pfam" id="PF00753">
    <property type="entry name" value="Lactamase_B"/>
    <property type="match status" value="1"/>
</dbReference>
<dbReference type="Pfam" id="PF12706">
    <property type="entry name" value="Lactamase_B_2"/>
    <property type="match status" value="1"/>
</dbReference>
<dbReference type="SUPFAM" id="SSF56281">
    <property type="entry name" value="Metallo-hydrolase/oxidoreductase"/>
    <property type="match status" value="1"/>
</dbReference>
<comment type="function">
    <text evidence="1">Zinc phosphodiesterase, which displays some tRNA 3'-processing endonuclease activity. Probably involved in tRNA maturation, by removing a 3'-trailer from precursor tRNA.</text>
</comment>
<comment type="catalytic activity">
    <reaction evidence="1">
        <text>Endonucleolytic cleavage of RNA, removing extra 3' nucleotides from tRNA precursor, generating 3' termini of tRNAs. A 3'-hydroxy group is left at the tRNA terminus and a 5'-phosphoryl group is left at the trailer molecule.</text>
        <dbReference type="EC" id="3.1.26.11"/>
    </reaction>
</comment>
<comment type="cofactor">
    <cofactor evidence="1">
        <name>Zn(2+)</name>
        <dbReference type="ChEBI" id="CHEBI:29105"/>
    </cofactor>
    <text evidence="1">Binds 2 Zn(2+) ions.</text>
</comment>
<comment type="subunit">
    <text evidence="1">Homodimer.</text>
</comment>
<comment type="similarity">
    <text evidence="1">Belongs to the RNase Z family.</text>
</comment>
<evidence type="ECO:0000255" key="1">
    <source>
        <dbReference type="HAMAP-Rule" id="MF_01818"/>
    </source>
</evidence>